<accession>P07802</accession>
<reference key="1">
    <citation type="journal article" date="1987" name="Eur. J. Biochem.">
        <title>Isolation of a cDNA and characterization of the 5' flanking region of the gene encoding the type I regulatory subunit of the cAMP-dependent protein kinase.</title>
        <authorList>
            <person name="Nowak I."/>
            <person name="Seipel K."/>
            <person name="Schwarz M."/>
            <person name="Jans D.A."/>
            <person name="Hemmings B.A."/>
        </authorList>
    </citation>
    <scope>NUCLEOTIDE SEQUENCE [MRNA]</scope>
    <scope>PARTIAL PROTEIN SEQUENCE</scope>
    <source>
        <tissue>Kidney</tissue>
    </source>
</reference>
<reference key="2">
    <citation type="journal article" date="1987" name="J. Biol. Chem.">
        <title>Antiparallel alignment of the two protomers of the regulatory subunit dimer of cAMP-dependent protein kinase I.</title>
        <authorList>
            <person name="Bubis J."/>
            <person name="Vedvick T.S."/>
            <person name="Taylor S.S."/>
        </authorList>
    </citation>
    <scope>DISULFIDE BONDS</scope>
</reference>
<name>KAP0_PIG</name>
<evidence type="ECO:0000250" key="1"/>
<evidence type="ECO:0000250" key="2">
    <source>
        <dbReference type="UniProtKB" id="P00514"/>
    </source>
</evidence>
<evidence type="ECO:0000250" key="3">
    <source>
        <dbReference type="UniProtKB" id="P09456"/>
    </source>
</evidence>
<evidence type="ECO:0000250" key="4">
    <source>
        <dbReference type="UniProtKB" id="P10644"/>
    </source>
</evidence>
<evidence type="ECO:0000250" key="5">
    <source>
        <dbReference type="UniProtKB" id="Q9DBC7"/>
    </source>
</evidence>
<evidence type="ECO:0000256" key="6">
    <source>
        <dbReference type="SAM" id="MobiDB-lite"/>
    </source>
</evidence>
<evidence type="ECO:0000269" key="7">
    <source>
    </source>
</evidence>
<evidence type="ECO:0000305" key="8"/>
<sequence length="380" mass="42922">MASGSTASEEERSLRECELYVQKHNIQALLKDSIVQLCTARPERPMAFLREYFERLEKEEAKQIQNLQKASARADSREDEISPPPPNPVVKGRRRRGAISAEVYTEEDAASYVRKVIPKDYKTMAALAKAIEKNVLFSHLDDNERSDIFDAMFPVSFIAGETVIQQGDEGDNFYVIDQGEMDVYVNNEWATSVGEGGSFGELALIYGTPRAATVKAKTNVKLWGNDRDSYRRILMGSTLRKRKMYEEFLSKVSILESLDKWERLTVADALEPVQFEDGQKIVVQGEPGDEFFIILEGSAAVLQRRSENEEFVEVGRLGPSDYFGEIALLMNRPRAATVVARGPLKCVKLDRPRFERVLGPCSDILKRNIQQYNSFVSLSV</sequence>
<feature type="chain" id="PRO_0000205379" description="cAMP-dependent protein kinase type I-alpha regulatory subunit">
    <location>
        <begin position="1"/>
        <end position="380"/>
    </location>
</feature>
<feature type="initiator methionine" description="Removed; alternate" evidence="2">
    <location>
        <position position="1"/>
    </location>
</feature>
<feature type="chain" id="PRO_0000423217" description="cAMP-dependent protein kinase type I-alpha regulatory subunit, N-terminally processed">
    <location>
        <begin position="2"/>
        <end position="380"/>
    </location>
</feature>
<feature type="region of interest" description="Dimerization and phosphorylation">
    <location>
        <begin position="2"/>
        <end position="135"/>
    </location>
</feature>
<feature type="region of interest" description="Disordered" evidence="6">
    <location>
        <begin position="64"/>
        <end position="96"/>
    </location>
</feature>
<feature type="short sequence motif" description="Pseudophosphorylation motif">
    <location>
        <begin position="95"/>
        <end position="99"/>
    </location>
</feature>
<feature type="binding site">
    <location>
        <begin position="136"/>
        <end position="253"/>
    </location>
    <ligand>
        <name>3',5'-cyclic AMP</name>
        <dbReference type="ChEBI" id="CHEBI:58165"/>
        <label>1</label>
    </ligand>
</feature>
<feature type="binding site">
    <location>
        <position position="201"/>
    </location>
    <ligand>
        <name>3',5'-cyclic AMP</name>
        <dbReference type="ChEBI" id="CHEBI:58165"/>
        <label>1</label>
    </ligand>
</feature>
<feature type="binding site">
    <location>
        <position position="210"/>
    </location>
    <ligand>
        <name>3',5'-cyclic AMP</name>
        <dbReference type="ChEBI" id="CHEBI:58165"/>
        <label>1</label>
    </ligand>
</feature>
<feature type="binding site">
    <location>
        <begin position="254"/>
        <end position="380"/>
    </location>
    <ligand>
        <name>3',5'-cyclic AMP</name>
        <dbReference type="ChEBI" id="CHEBI:58165"/>
        <label>2</label>
    </ligand>
</feature>
<feature type="binding site">
    <location>
        <position position="325"/>
    </location>
    <ligand>
        <name>3',5'-cyclic AMP</name>
        <dbReference type="ChEBI" id="CHEBI:58165"/>
        <label>2</label>
    </ligand>
</feature>
<feature type="binding site">
    <location>
        <position position="334"/>
    </location>
    <ligand>
        <name>3',5'-cyclic AMP</name>
        <dbReference type="ChEBI" id="CHEBI:58165"/>
        <label>2</label>
    </ligand>
</feature>
<feature type="modified residue" description="N-acetylmethionine" evidence="4">
    <location>
        <position position="1"/>
    </location>
</feature>
<feature type="modified residue" description="N-acetylalanine; in cAMP-dependent protein kinase type I-alpha regulatory subunit, N-terminally processed" evidence="2">
    <location>
        <position position="2"/>
    </location>
</feature>
<feature type="modified residue" description="Phosphoserine" evidence="3">
    <location>
        <position position="3"/>
    </location>
</feature>
<feature type="modified residue" description="Phosphoserine" evidence="4">
    <location>
        <position position="76"/>
    </location>
</feature>
<feature type="modified residue" description="Phosphoserine" evidence="4">
    <location>
        <position position="82"/>
    </location>
</feature>
<feature type="modified residue" description="Phosphoserine" evidence="5">
    <location>
        <position position="100"/>
    </location>
</feature>
<feature type="modified residue" description="Phosphoserine" evidence="3">
    <location>
        <position position="257"/>
    </location>
</feature>
<feature type="disulfide bond" description="Interchain (with C-38)" evidence="7">
    <location>
        <position position="17"/>
    </location>
</feature>
<feature type="disulfide bond" description="Interchain (with C-17)" evidence="7">
    <location>
        <position position="38"/>
    </location>
</feature>
<proteinExistence type="evidence at protein level"/>
<protein>
    <recommendedName>
        <fullName>cAMP-dependent protein kinase type I-alpha regulatory subunit</fullName>
    </recommendedName>
    <component>
        <recommendedName>
            <fullName>cAMP-dependent protein kinase type I-alpha regulatory subunit, N-terminally processed</fullName>
        </recommendedName>
    </component>
</protein>
<organism>
    <name type="scientific">Sus scrofa</name>
    <name type="common">Pig</name>
    <dbReference type="NCBI Taxonomy" id="9823"/>
    <lineage>
        <taxon>Eukaryota</taxon>
        <taxon>Metazoa</taxon>
        <taxon>Chordata</taxon>
        <taxon>Craniata</taxon>
        <taxon>Vertebrata</taxon>
        <taxon>Euteleostomi</taxon>
        <taxon>Mammalia</taxon>
        <taxon>Eutheria</taxon>
        <taxon>Laurasiatheria</taxon>
        <taxon>Artiodactyla</taxon>
        <taxon>Suina</taxon>
        <taxon>Suidae</taxon>
        <taxon>Sus</taxon>
    </lineage>
</organism>
<comment type="function">
    <text evidence="1">Regulatory subunit of the cAMP-dependent protein kinases involved in cAMP signaling in cells.</text>
</comment>
<comment type="subunit">
    <text evidence="1 4">The inactive holoenzyme is composed of two regulatory chains and two catalytic chains. Activation by cAMP releases the two active catalytic monomers and the regulatory dimer. Interacts with PRKACA and PRKACB (By similarity). PRKAR1A also interacts with RFC2; the complex may be involved in cell survival. Interacts with AKAP4. Interacts with RARA; the interaction occurs in the presence of cAMP or FSH and regulates RARA transcriptional activity. Interacts with the phosphorylated form of PJA2. Interacts with CBFA2T3. Interacts with PRKX; regulates this cAMP-dependent protein kinase (By similarity). Interacts with smAKAP; this interaction may target PRKAR1A to the plasma membrane. Interacts with AICDA (By similarity).</text>
</comment>
<comment type="subcellular location">
    <subcellularLocation>
        <location evidence="1">Cell membrane</location>
    </subcellularLocation>
</comment>
<comment type="tissue specificity">
    <text>Four types of regulatory chains are found: I-alpha, I-beta, II-alpha, and II-beta. Their expression varies among tissues and is in some cases constitutive and in others inducible.</text>
</comment>
<comment type="PTM">
    <text>The pseudophosphorylation site binds to the substrate-binding region of the catalytic chain, resulting in the inhibition of its activity.</text>
</comment>
<comment type="similarity">
    <text evidence="8">Belongs to the cAMP-dependent kinase regulatory chain family.</text>
</comment>
<dbReference type="EMBL" id="X05942">
    <property type="protein sequence ID" value="CAA29375.1"/>
    <property type="molecule type" value="mRNA"/>
</dbReference>
<dbReference type="PIR" id="S00083">
    <property type="entry name" value="OKPG1R"/>
</dbReference>
<dbReference type="RefSeq" id="NP_999191.1">
    <property type="nucleotide sequence ID" value="NM_214026.1"/>
</dbReference>
<dbReference type="SMR" id="P07802"/>
<dbReference type="FunCoup" id="P07802">
    <property type="interactions" value="1839"/>
</dbReference>
<dbReference type="STRING" id="9823.ENSSSCP00000044093"/>
<dbReference type="PaxDb" id="9823-ENSSSCP00000018286"/>
<dbReference type="PeptideAtlas" id="P07802"/>
<dbReference type="GeneID" id="397091"/>
<dbReference type="KEGG" id="ssc:397091"/>
<dbReference type="CTD" id="5573"/>
<dbReference type="eggNOG" id="KOG1113">
    <property type="taxonomic scope" value="Eukaryota"/>
</dbReference>
<dbReference type="InParanoid" id="P07802"/>
<dbReference type="OrthoDB" id="417078at2759"/>
<dbReference type="Proteomes" id="UP000008227">
    <property type="component" value="Unplaced"/>
</dbReference>
<dbReference type="Proteomes" id="UP000314985">
    <property type="component" value="Unplaced"/>
</dbReference>
<dbReference type="Proteomes" id="UP000694570">
    <property type="component" value="Unplaced"/>
</dbReference>
<dbReference type="Proteomes" id="UP000694571">
    <property type="component" value="Unplaced"/>
</dbReference>
<dbReference type="Proteomes" id="UP000694720">
    <property type="component" value="Unplaced"/>
</dbReference>
<dbReference type="Proteomes" id="UP000694722">
    <property type="component" value="Unplaced"/>
</dbReference>
<dbReference type="Proteomes" id="UP000694723">
    <property type="component" value="Unplaced"/>
</dbReference>
<dbReference type="Proteomes" id="UP000694724">
    <property type="component" value="Unplaced"/>
</dbReference>
<dbReference type="Proteomes" id="UP000694725">
    <property type="component" value="Unplaced"/>
</dbReference>
<dbReference type="Proteomes" id="UP000694726">
    <property type="component" value="Unplaced"/>
</dbReference>
<dbReference type="Proteomes" id="UP000694727">
    <property type="component" value="Unplaced"/>
</dbReference>
<dbReference type="Proteomes" id="UP000694728">
    <property type="component" value="Unplaced"/>
</dbReference>
<dbReference type="GO" id="GO:0005952">
    <property type="term" value="C:cAMP-dependent protein kinase complex"/>
    <property type="evidence" value="ECO:0000318"/>
    <property type="project" value="GO_Central"/>
</dbReference>
<dbReference type="GO" id="GO:0005737">
    <property type="term" value="C:cytoplasm"/>
    <property type="evidence" value="ECO:0000315"/>
    <property type="project" value="AgBase"/>
</dbReference>
<dbReference type="GO" id="GO:0005829">
    <property type="term" value="C:cytosol"/>
    <property type="evidence" value="ECO:0000318"/>
    <property type="project" value="GO_Central"/>
</dbReference>
<dbReference type="GO" id="GO:0005886">
    <property type="term" value="C:plasma membrane"/>
    <property type="evidence" value="ECO:0007669"/>
    <property type="project" value="UniProtKB-SubCell"/>
</dbReference>
<dbReference type="GO" id="GO:0030552">
    <property type="term" value="F:cAMP binding"/>
    <property type="evidence" value="ECO:0000318"/>
    <property type="project" value="GO_Central"/>
</dbReference>
<dbReference type="GO" id="GO:0004862">
    <property type="term" value="F:cAMP-dependent protein kinase inhibitor activity"/>
    <property type="evidence" value="ECO:0000318"/>
    <property type="project" value="GO_Central"/>
</dbReference>
<dbReference type="GO" id="GO:0034236">
    <property type="term" value="F:protein kinase A catalytic subunit binding"/>
    <property type="evidence" value="ECO:0000318"/>
    <property type="project" value="GO_Central"/>
</dbReference>
<dbReference type="GO" id="GO:0007189">
    <property type="term" value="P:adenylate cyclase-activating G protein-coupled receptor signaling pathway"/>
    <property type="evidence" value="ECO:0000318"/>
    <property type="project" value="GO_Central"/>
</dbReference>
<dbReference type="GO" id="GO:1903538">
    <property type="term" value="P:regulation of meiotic cell cycle process involved in oocyte maturation"/>
    <property type="evidence" value="ECO:0000315"/>
    <property type="project" value="AgBase"/>
</dbReference>
<dbReference type="CDD" id="cd00038">
    <property type="entry name" value="CAP_ED"/>
    <property type="match status" value="2"/>
</dbReference>
<dbReference type="CDD" id="cd12101">
    <property type="entry name" value="DD_RIalpha_PKA"/>
    <property type="match status" value="1"/>
</dbReference>
<dbReference type="FunFam" id="2.60.120.10:FF:000013">
    <property type="entry name" value="cAMP-dependent protein kinase type I regulatory subunit"/>
    <property type="match status" value="1"/>
</dbReference>
<dbReference type="FunFam" id="1.20.890.10:FF:000001">
    <property type="entry name" value="cAMP-dependent protein kinase type I-alpha regulatory subunit"/>
    <property type="match status" value="1"/>
</dbReference>
<dbReference type="FunFam" id="2.60.120.10:FF:000006">
    <property type="entry name" value="cAMP-dependent protein kinase type I-alpha regulatory subunit"/>
    <property type="match status" value="1"/>
</dbReference>
<dbReference type="Gene3D" id="1.20.890.10">
    <property type="entry name" value="cAMP-dependent protein kinase regulatory subunit, dimerization-anchoring domain"/>
    <property type="match status" value="1"/>
</dbReference>
<dbReference type="Gene3D" id="2.60.120.10">
    <property type="entry name" value="Jelly Rolls"/>
    <property type="match status" value="2"/>
</dbReference>
<dbReference type="InterPro" id="IPR050503">
    <property type="entry name" value="cAMP-dep_PK_reg_su-like"/>
</dbReference>
<dbReference type="InterPro" id="IPR012198">
    <property type="entry name" value="cAMP_dep_PK_reg_su"/>
</dbReference>
<dbReference type="InterPro" id="IPR003117">
    <property type="entry name" value="cAMP_dep_PK_reg_su_I/II_a/b"/>
</dbReference>
<dbReference type="InterPro" id="IPR018488">
    <property type="entry name" value="cNMP-bd_CS"/>
</dbReference>
<dbReference type="InterPro" id="IPR000595">
    <property type="entry name" value="cNMP-bd_dom"/>
</dbReference>
<dbReference type="InterPro" id="IPR018490">
    <property type="entry name" value="cNMP-bd_dom_sf"/>
</dbReference>
<dbReference type="InterPro" id="IPR014710">
    <property type="entry name" value="RmlC-like_jellyroll"/>
</dbReference>
<dbReference type="PANTHER" id="PTHR11635">
    <property type="entry name" value="CAMP-DEPENDENT PROTEIN KINASE REGULATORY CHAIN"/>
    <property type="match status" value="1"/>
</dbReference>
<dbReference type="PANTHER" id="PTHR11635:SF129">
    <property type="entry name" value="CAMP-DEPENDENT PROTEIN KINASE TYPE I-ALPHA REGULATORY SUBUNIT"/>
    <property type="match status" value="1"/>
</dbReference>
<dbReference type="Pfam" id="PF00027">
    <property type="entry name" value="cNMP_binding"/>
    <property type="match status" value="2"/>
</dbReference>
<dbReference type="Pfam" id="PF02197">
    <property type="entry name" value="RIIa"/>
    <property type="match status" value="1"/>
</dbReference>
<dbReference type="PIRSF" id="PIRSF000548">
    <property type="entry name" value="PK_regulatory"/>
    <property type="match status" value="1"/>
</dbReference>
<dbReference type="PRINTS" id="PR00103">
    <property type="entry name" value="CAMPKINASE"/>
</dbReference>
<dbReference type="SMART" id="SM00100">
    <property type="entry name" value="cNMP"/>
    <property type="match status" value="2"/>
</dbReference>
<dbReference type="SMART" id="SM00394">
    <property type="entry name" value="RIIa"/>
    <property type="match status" value="1"/>
</dbReference>
<dbReference type="SUPFAM" id="SSF51206">
    <property type="entry name" value="cAMP-binding domain-like"/>
    <property type="match status" value="2"/>
</dbReference>
<dbReference type="SUPFAM" id="SSF47391">
    <property type="entry name" value="Dimerization-anchoring domain of cAMP-dependent PK regulatory subunit"/>
    <property type="match status" value="1"/>
</dbReference>
<dbReference type="PROSITE" id="PS00888">
    <property type="entry name" value="CNMP_BINDING_1"/>
    <property type="match status" value="2"/>
</dbReference>
<dbReference type="PROSITE" id="PS00889">
    <property type="entry name" value="CNMP_BINDING_2"/>
    <property type="match status" value="2"/>
</dbReference>
<dbReference type="PROSITE" id="PS50042">
    <property type="entry name" value="CNMP_BINDING_3"/>
    <property type="match status" value="2"/>
</dbReference>
<keyword id="KW-0007">Acetylation</keyword>
<keyword id="KW-0114">cAMP</keyword>
<keyword id="KW-0116">cAMP-binding</keyword>
<keyword id="KW-1003">Cell membrane</keyword>
<keyword id="KW-0903">Direct protein sequencing</keyword>
<keyword id="KW-1015">Disulfide bond</keyword>
<keyword id="KW-0472">Membrane</keyword>
<keyword id="KW-0547">Nucleotide-binding</keyword>
<keyword id="KW-0597">Phosphoprotein</keyword>
<keyword id="KW-1185">Reference proteome</keyword>
<keyword id="KW-0677">Repeat</keyword>
<gene>
    <name type="primary">PRKAR1A</name>
</gene>